<proteinExistence type="inferred from homology"/>
<evidence type="ECO:0000255" key="1">
    <source>
        <dbReference type="HAMAP-Rule" id="MF_01849"/>
    </source>
</evidence>
<evidence type="ECO:0000255" key="2">
    <source>
        <dbReference type="PROSITE-ProRule" id="PRU01266"/>
    </source>
</evidence>
<feature type="chain" id="PRO_0000350010" description="Probable dual-specificity RNA methyltransferase RlmN">
    <location>
        <begin position="1"/>
        <end position="352"/>
    </location>
</feature>
<feature type="domain" description="Radical SAM core" evidence="2">
    <location>
        <begin position="98"/>
        <end position="328"/>
    </location>
</feature>
<feature type="active site" description="Proton acceptor" evidence="1">
    <location>
        <position position="92"/>
    </location>
</feature>
<feature type="active site" description="S-methylcysteine intermediate" evidence="1">
    <location>
        <position position="333"/>
    </location>
</feature>
<feature type="binding site" evidence="1">
    <location>
        <position position="112"/>
    </location>
    <ligand>
        <name>[4Fe-4S] cluster</name>
        <dbReference type="ChEBI" id="CHEBI:49883"/>
        <note>4Fe-4S-S-AdoMet</note>
    </ligand>
</feature>
<feature type="binding site" evidence="1">
    <location>
        <position position="116"/>
    </location>
    <ligand>
        <name>[4Fe-4S] cluster</name>
        <dbReference type="ChEBI" id="CHEBI:49883"/>
        <note>4Fe-4S-S-AdoMet</note>
    </ligand>
</feature>
<feature type="binding site" evidence="1">
    <location>
        <position position="119"/>
    </location>
    <ligand>
        <name>[4Fe-4S] cluster</name>
        <dbReference type="ChEBI" id="CHEBI:49883"/>
        <note>4Fe-4S-S-AdoMet</note>
    </ligand>
</feature>
<feature type="binding site" evidence="1">
    <location>
        <begin position="159"/>
        <end position="160"/>
    </location>
    <ligand>
        <name>S-adenosyl-L-methionine</name>
        <dbReference type="ChEBI" id="CHEBI:59789"/>
    </ligand>
</feature>
<feature type="binding site" evidence="1">
    <location>
        <position position="191"/>
    </location>
    <ligand>
        <name>S-adenosyl-L-methionine</name>
        <dbReference type="ChEBI" id="CHEBI:59789"/>
    </ligand>
</feature>
<feature type="binding site" evidence="1">
    <location>
        <begin position="214"/>
        <end position="216"/>
    </location>
    <ligand>
        <name>S-adenosyl-L-methionine</name>
        <dbReference type="ChEBI" id="CHEBI:59789"/>
    </ligand>
</feature>
<feature type="binding site" evidence="1">
    <location>
        <position position="290"/>
    </location>
    <ligand>
        <name>S-adenosyl-L-methionine</name>
        <dbReference type="ChEBI" id="CHEBI:59789"/>
    </ligand>
</feature>
<feature type="disulfide bond" description="(transient)" evidence="1">
    <location>
        <begin position="105"/>
        <end position="333"/>
    </location>
</feature>
<gene>
    <name evidence="1" type="primary">rlmN</name>
    <name type="ordered locus">Amet_2781</name>
</gene>
<name>RLMN_ALKMQ</name>
<reference key="1">
    <citation type="journal article" date="2016" name="Genome Announc.">
        <title>Complete genome sequence of Alkaliphilus metalliredigens strain QYMF, an alkaliphilic and metal-reducing bacterium isolated from borax-contaminated leachate ponds.</title>
        <authorList>
            <person name="Hwang C."/>
            <person name="Copeland A."/>
            <person name="Lucas S."/>
            <person name="Lapidus A."/>
            <person name="Barry K."/>
            <person name="Detter J.C."/>
            <person name="Glavina Del Rio T."/>
            <person name="Hammon N."/>
            <person name="Israni S."/>
            <person name="Dalin E."/>
            <person name="Tice H."/>
            <person name="Pitluck S."/>
            <person name="Chertkov O."/>
            <person name="Brettin T."/>
            <person name="Bruce D."/>
            <person name="Han C."/>
            <person name="Schmutz J."/>
            <person name="Larimer F."/>
            <person name="Land M.L."/>
            <person name="Hauser L."/>
            <person name="Kyrpides N."/>
            <person name="Mikhailova N."/>
            <person name="Ye Q."/>
            <person name="Zhou J."/>
            <person name="Richardson P."/>
            <person name="Fields M.W."/>
        </authorList>
    </citation>
    <scope>NUCLEOTIDE SEQUENCE [LARGE SCALE GENOMIC DNA]</scope>
    <source>
        <strain>QYMF</strain>
    </source>
</reference>
<accession>A6TRW3</accession>
<protein>
    <recommendedName>
        <fullName evidence="1">Probable dual-specificity RNA methyltransferase RlmN</fullName>
        <ecNumber evidence="1">2.1.1.192</ecNumber>
    </recommendedName>
    <alternativeName>
        <fullName evidence="1">23S rRNA (adenine(2503)-C(2))-methyltransferase</fullName>
    </alternativeName>
    <alternativeName>
        <fullName evidence="1">23S rRNA m2A2503 methyltransferase</fullName>
    </alternativeName>
    <alternativeName>
        <fullName evidence="1">Ribosomal RNA large subunit methyltransferase N</fullName>
    </alternativeName>
    <alternativeName>
        <fullName evidence="1">tRNA (adenine(37)-C(2))-methyltransferase</fullName>
    </alternativeName>
    <alternativeName>
        <fullName evidence="1">tRNA m2A37 methyltransferase</fullName>
    </alternativeName>
</protein>
<keyword id="KW-0004">4Fe-4S</keyword>
<keyword id="KW-0963">Cytoplasm</keyword>
<keyword id="KW-1015">Disulfide bond</keyword>
<keyword id="KW-0408">Iron</keyword>
<keyword id="KW-0411">Iron-sulfur</keyword>
<keyword id="KW-0479">Metal-binding</keyword>
<keyword id="KW-0489">Methyltransferase</keyword>
<keyword id="KW-1185">Reference proteome</keyword>
<keyword id="KW-0698">rRNA processing</keyword>
<keyword id="KW-0949">S-adenosyl-L-methionine</keyword>
<keyword id="KW-0808">Transferase</keyword>
<keyword id="KW-0819">tRNA processing</keyword>
<comment type="function">
    <text evidence="1">Specifically methylates position 2 of adenine 2503 in 23S rRNA and position 2 of adenine 37 in tRNAs.</text>
</comment>
<comment type="catalytic activity">
    <reaction evidence="1">
        <text>adenosine(2503) in 23S rRNA + 2 reduced [2Fe-2S]-[ferredoxin] + 2 S-adenosyl-L-methionine = 2-methyladenosine(2503) in 23S rRNA + 5'-deoxyadenosine + L-methionine + 2 oxidized [2Fe-2S]-[ferredoxin] + S-adenosyl-L-homocysteine</text>
        <dbReference type="Rhea" id="RHEA:42916"/>
        <dbReference type="Rhea" id="RHEA-COMP:10000"/>
        <dbReference type="Rhea" id="RHEA-COMP:10001"/>
        <dbReference type="Rhea" id="RHEA-COMP:10152"/>
        <dbReference type="Rhea" id="RHEA-COMP:10282"/>
        <dbReference type="ChEBI" id="CHEBI:17319"/>
        <dbReference type="ChEBI" id="CHEBI:33737"/>
        <dbReference type="ChEBI" id="CHEBI:33738"/>
        <dbReference type="ChEBI" id="CHEBI:57844"/>
        <dbReference type="ChEBI" id="CHEBI:57856"/>
        <dbReference type="ChEBI" id="CHEBI:59789"/>
        <dbReference type="ChEBI" id="CHEBI:74411"/>
        <dbReference type="ChEBI" id="CHEBI:74497"/>
        <dbReference type="EC" id="2.1.1.192"/>
    </reaction>
</comment>
<comment type="catalytic activity">
    <reaction evidence="1">
        <text>adenosine(37) in tRNA + 2 reduced [2Fe-2S]-[ferredoxin] + 2 S-adenosyl-L-methionine = 2-methyladenosine(37) in tRNA + 5'-deoxyadenosine + L-methionine + 2 oxidized [2Fe-2S]-[ferredoxin] + S-adenosyl-L-homocysteine</text>
        <dbReference type="Rhea" id="RHEA:43332"/>
        <dbReference type="Rhea" id="RHEA-COMP:10000"/>
        <dbReference type="Rhea" id="RHEA-COMP:10001"/>
        <dbReference type="Rhea" id="RHEA-COMP:10162"/>
        <dbReference type="Rhea" id="RHEA-COMP:10485"/>
        <dbReference type="ChEBI" id="CHEBI:17319"/>
        <dbReference type="ChEBI" id="CHEBI:33737"/>
        <dbReference type="ChEBI" id="CHEBI:33738"/>
        <dbReference type="ChEBI" id="CHEBI:57844"/>
        <dbReference type="ChEBI" id="CHEBI:57856"/>
        <dbReference type="ChEBI" id="CHEBI:59789"/>
        <dbReference type="ChEBI" id="CHEBI:74411"/>
        <dbReference type="ChEBI" id="CHEBI:74497"/>
        <dbReference type="EC" id="2.1.1.192"/>
    </reaction>
</comment>
<comment type="cofactor">
    <cofactor evidence="1">
        <name>[4Fe-4S] cluster</name>
        <dbReference type="ChEBI" id="CHEBI:49883"/>
    </cofactor>
    <text evidence="1">Binds 1 [4Fe-4S] cluster. The cluster is coordinated with 3 cysteines and an exchangeable S-adenosyl-L-methionine.</text>
</comment>
<comment type="subcellular location">
    <subcellularLocation>
        <location evidence="1">Cytoplasm</location>
    </subcellularLocation>
</comment>
<comment type="miscellaneous">
    <text evidence="1">Reaction proceeds by a ping-pong mechanism involving intermediate methylation of a conserved cysteine residue.</text>
</comment>
<comment type="similarity">
    <text evidence="1">Belongs to the radical SAM superfamily. RlmN family.</text>
</comment>
<organism>
    <name type="scientific">Alkaliphilus metalliredigens (strain QYMF)</name>
    <dbReference type="NCBI Taxonomy" id="293826"/>
    <lineage>
        <taxon>Bacteria</taxon>
        <taxon>Bacillati</taxon>
        <taxon>Bacillota</taxon>
        <taxon>Clostridia</taxon>
        <taxon>Peptostreptococcales</taxon>
        <taxon>Natronincolaceae</taxon>
        <taxon>Alkaliphilus</taxon>
    </lineage>
</organism>
<dbReference type="EC" id="2.1.1.192" evidence="1"/>
<dbReference type="EMBL" id="CP000724">
    <property type="protein sequence ID" value="ABR48931.1"/>
    <property type="molecule type" value="Genomic_DNA"/>
</dbReference>
<dbReference type="RefSeq" id="WP_012063902.1">
    <property type="nucleotide sequence ID" value="NC_009633.1"/>
</dbReference>
<dbReference type="SMR" id="A6TRW3"/>
<dbReference type="STRING" id="293826.Amet_2781"/>
<dbReference type="KEGG" id="amt:Amet_2781"/>
<dbReference type="eggNOG" id="COG0820">
    <property type="taxonomic scope" value="Bacteria"/>
</dbReference>
<dbReference type="HOGENOM" id="CLU_029101_0_1_9"/>
<dbReference type="OrthoDB" id="9793973at2"/>
<dbReference type="Proteomes" id="UP000001572">
    <property type="component" value="Chromosome"/>
</dbReference>
<dbReference type="GO" id="GO:0005737">
    <property type="term" value="C:cytoplasm"/>
    <property type="evidence" value="ECO:0007669"/>
    <property type="project" value="UniProtKB-SubCell"/>
</dbReference>
<dbReference type="GO" id="GO:0051539">
    <property type="term" value="F:4 iron, 4 sulfur cluster binding"/>
    <property type="evidence" value="ECO:0007669"/>
    <property type="project" value="UniProtKB-UniRule"/>
</dbReference>
<dbReference type="GO" id="GO:0046872">
    <property type="term" value="F:metal ion binding"/>
    <property type="evidence" value="ECO:0007669"/>
    <property type="project" value="UniProtKB-KW"/>
</dbReference>
<dbReference type="GO" id="GO:0070040">
    <property type="term" value="F:rRNA (adenine(2503)-C2-)-methyltransferase activity"/>
    <property type="evidence" value="ECO:0007669"/>
    <property type="project" value="UniProtKB-UniRule"/>
</dbReference>
<dbReference type="GO" id="GO:0019843">
    <property type="term" value="F:rRNA binding"/>
    <property type="evidence" value="ECO:0007669"/>
    <property type="project" value="UniProtKB-UniRule"/>
</dbReference>
<dbReference type="GO" id="GO:0002935">
    <property type="term" value="F:tRNA (adenine(37)-C2)-methyltransferase activity"/>
    <property type="evidence" value="ECO:0007669"/>
    <property type="project" value="UniProtKB-UniRule"/>
</dbReference>
<dbReference type="GO" id="GO:0000049">
    <property type="term" value="F:tRNA binding"/>
    <property type="evidence" value="ECO:0007669"/>
    <property type="project" value="UniProtKB-UniRule"/>
</dbReference>
<dbReference type="GO" id="GO:0070475">
    <property type="term" value="P:rRNA base methylation"/>
    <property type="evidence" value="ECO:0007669"/>
    <property type="project" value="UniProtKB-UniRule"/>
</dbReference>
<dbReference type="GO" id="GO:0030488">
    <property type="term" value="P:tRNA methylation"/>
    <property type="evidence" value="ECO:0007669"/>
    <property type="project" value="UniProtKB-UniRule"/>
</dbReference>
<dbReference type="CDD" id="cd01335">
    <property type="entry name" value="Radical_SAM"/>
    <property type="match status" value="1"/>
</dbReference>
<dbReference type="FunFam" id="3.20.20.70:FF:000014">
    <property type="entry name" value="Probable dual-specificity RNA methyltransferase RlmN"/>
    <property type="match status" value="1"/>
</dbReference>
<dbReference type="Gene3D" id="1.10.150.530">
    <property type="match status" value="1"/>
</dbReference>
<dbReference type="Gene3D" id="3.20.20.70">
    <property type="entry name" value="Aldolase class I"/>
    <property type="match status" value="1"/>
</dbReference>
<dbReference type="HAMAP" id="MF_01849">
    <property type="entry name" value="RNA_methyltr_RlmN"/>
    <property type="match status" value="1"/>
</dbReference>
<dbReference type="InterPro" id="IPR013785">
    <property type="entry name" value="Aldolase_TIM"/>
</dbReference>
<dbReference type="InterPro" id="IPR040072">
    <property type="entry name" value="Methyltransferase_A"/>
</dbReference>
<dbReference type="InterPro" id="IPR048641">
    <property type="entry name" value="RlmN_N"/>
</dbReference>
<dbReference type="InterPro" id="IPR027492">
    <property type="entry name" value="RNA_MTrfase_RlmN"/>
</dbReference>
<dbReference type="InterPro" id="IPR004383">
    <property type="entry name" value="rRNA_lsu_MTrfase_RlmN/Cfr"/>
</dbReference>
<dbReference type="InterPro" id="IPR007197">
    <property type="entry name" value="rSAM"/>
</dbReference>
<dbReference type="NCBIfam" id="TIGR00048">
    <property type="entry name" value="rRNA_mod_RlmN"/>
    <property type="match status" value="1"/>
</dbReference>
<dbReference type="PANTHER" id="PTHR30544">
    <property type="entry name" value="23S RRNA METHYLTRANSFERASE"/>
    <property type="match status" value="1"/>
</dbReference>
<dbReference type="PANTHER" id="PTHR30544:SF5">
    <property type="entry name" value="RADICAL SAM CORE DOMAIN-CONTAINING PROTEIN"/>
    <property type="match status" value="1"/>
</dbReference>
<dbReference type="Pfam" id="PF04055">
    <property type="entry name" value="Radical_SAM"/>
    <property type="match status" value="1"/>
</dbReference>
<dbReference type="Pfam" id="PF21016">
    <property type="entry name" value="RlmN_N"/>
    <property type="match status" value="1"/>
</dbReference>
<dbReference type="PIRSF" id="PIRSF006004">
    <property type="entry name" value="CHP00048"/>
    <property type="match status" value="1"/>
</dbReference>
<dbReference type="SFLD" id="SFLDF00275">
    <property type="entry name" value="adenosine_C2_methyltransferase"/>
    <property type="match status" value="1"/>
</dbReference>
<dbReference type="SFLD" id="SFLDG01062">
    <property type="entry name" value="methyltransferase_(Class_A)"/>
    <property type="match status" value="1"/>
</dbReference>
<dbReference type="SUPFAM" id="SSF102114">
    <property type="entry name" value="Radical SAM enzymes"/>
    <property type="match status" value="1"/>
</dbReference>
<dbReference type="PROSITE" id="PS51918">
    <property type="entry name" value="RADICAL_SAM"/>
    <property type="match status" value="1"/>
</dbReference>
<sequence>MDKVDLLSLTMEEMESLFLEIGEKKFRAKQAFQWVNKGIKQYEEMTNLSKKLIKQLSEETRITHNRIEEKFVSKIDGTVKYLFLLDDGHIIEGVLMKYKHGFTACISTQVGCAMGCQFCASTTGGLIRNLRAGEMIDQILLMQQDQGERISNIVLMGSGEPLHNYDETIRFLKIVNDPEGLNIGNRHITLSTCGLVPEIKKLGALQIPINLAISLHAPNDQLRKQTMPIAQKYTIDQLIQSCYDYLENNNRRITFEYALIEDVNDGEKEAHELSKLLKGLLCHVNLIPINPIEERTYQKSKDSQVKKFQQILKSNGIEATIRREMGTDIQGACGQLRRKYVDDQEKKEISEV</sequence>